<name>GREA_SYNC1</name>
<feature type="chain" id="PRO_1000094183" description="Transcription elongation factor GreA">
    <location>
        <begin position="1"/>
        <end position="158"/>
    </location>
</feature>
<feature type="coiled-coil region" evidence="1">
    <location>
        <begin position="48"/>
        <end position="74"/>
    </location>
</feature>
<keyword id="KW-0175">Coiled coil</keyword>
<keyword id="KW-0238">DNA-binding</keyword>
<keyword id="KW-1185">Reference proteome</keyword>
<keyword id="KW-0804">Transcription</keyword>
<keyword id="KW-0805">Transcription regulation</keyword>
<organism>
    <name type="scientific">Syntrophotalea carbinolica (strain DSM 2380 / NBRC 103641 / GraBd1)</name>
    <name type="common">Pelobacter carbinolicus</name>
    <dbReference type="NCBI Taxonomy" id="338963"/>
    <lineage>
        <taxon>Bacteria</taxon>
        <taxon>Pseudomonadati</taxon>
        <taxon>Thermodesulfobacteriota</taxon>
        <taxon>Desulfuromonadia</taxon>
        <taxon>Desulfuromonadales</taxon>
        <taxon>Syntrophotaleaceae</taxon>
        <taxon>Syntrophotalea</taxon>
    </lineage>
</organism>
<protein>
    <recommendedName>
        <fullName evidence="1">Transcription elongation factor GreA</fullName>
    </recommendedName>
    <alternativeName>
        <fullName evidence="1">Transcript cleavage factor GreA</fullName>
    </alternativeName>
</protein>
<evidence type="ECO:0000255" key="1">
    <source>
        <dbReference type="HAMAP-Rule" id="MF_00105"/>
    </source>
</evidence>
<gene>
    <name evidence="1" type="primary">greA</name>
    <name type="ordered locus">Pcar_1611</name>
</gene>
<accession>Q3A452</accession>
<reference key="1">
    <citation type="submission" date="2005-10" db="EMBL/GenBank/DDBJ databases">
        <title>Complete sequence of Pelobacter carbinolicus DSM 2380.</title>
        <authorList>
            <person name="Copeland A."/>
            <person name="Lucas S."/>
            <person name="Lapidus A."/>
            <person name="Barry K."/>
            <person name="Detter J.C."/>
            <person name="Glavina T."/>
            <person name="Hammon N."/>
            <person name="Israni S."/>
            <person name="Pitluck S."/>
            <person name="Chertkov O."/>
            <person name="Schmutz J."/>
            <person name="Larimer F."/>
            <person name="Land M."/>
            <person name="Kyrpides N."/>
            <person name="Ivanova N."/>
            <person name="Richardson P."/>
        </authorList>
    </citation>
    <scope>NUCLEOTIDE SEQUENCE [LARGE SCALE GENOMIC DNA]</scope>
    <source>
        <strain>DSM 2380 / NBRC 103641 / GraBd1</strain>
    </source>
</reference>
<proteinExistence type="inferred from homology"/>
<dbReference type="EMBL" id="CP000142">
    <property type="protein sequence ID" value="ABA88855.1"/>
    <property type="molecule type" value="Genomic_DNA"/>
</dbReference>
<dbReference type="RefSeq" id="WP_011341342.1">
    <property type="nucleotide sequence ID" value="NC_007498.2"/>
</dbReference>
<dbReference type="SMR" id="Q3A452"/>
<dbReference type="STRING" id="338963.Pcar_1611"/>
<dbReference type="KEGG" id="pca:Pcar_1611"/>
<dbReference type="eggNOG" id="COG0782">
    <property type="taxonomic scope" value="Bacteria"/>
</dbReference>
<dbReference type="HOGENOM" id="CLU_101379_2_1_7"/>
<dbReference type="OrthoDB" id="9808774at2"/>
<dbReference type="Proteomes" id="UP000002534">
    <property type="component" value="Chromosome"/>
</dbReference>
<dbReference type="GO" id="GO:0003677">
    <property type="term" value="F:DNA binding"/>
    <property type="evidence" value="ECO:0007669"/>
    <property type="project" value="UniProtKB-UniRule"/>
</dbReference>
<dbReference type="GO" id="GO:0070063">
    <property type="term" value="F:RNA polymerase binding"/>
    <property type="evidence" value="ECO:0007669"/>
    <property type="project" value="InterPro"/>
</dbReference>
<dbReference type="GO" id="GO:0006354">
    <property type="term" value="P:DNA-templated transcription elongation"/>
    <property type="evidence" value="ECO:0007669"/>
    <property type="project" value="TreeGrafter"/>
</dbReference>
<dbReference type="GO" id="GO:0032784">
    <property type="term" value="P:regulation of DNA-templated transcription elongation"/>
    <property type="evidence" value="ECO:0007669"/>
    <property type="project" value="UniProtKB-UniRule"/>
</dbReference>
<dbReference type="FunFam" id="1.10.287.180:FF:000001">
    <property type="entry name" value="Transcription elongation factor GreA"/>
    <property type="match status" value="1"/>
</dbReference>
<dbReference type="FunFam" id="3.10.50.30:FF:000001">
    <property type="entry name" value="Transcription elongation factor GreA"/>
    <property type="match status" value="1"/>
</dbReference>
<dbReference type="Gene3D" id="3.10.50.30">
    <property type="entry name" value="Transcription elongation factor, GreA/GreB, C-terminal domain"/>
    <property type="match status" value="1"/>
</dbReference>
<dbReference type="Gene3D" id="1.10.287.180">
    <property type="entry name" value="Transcription elongation factor, GreA/GreB, N-terminal domain"/>
    <property type="match status" value="1"/>
</dbReference>
<dbReference type="HAMAP" id="MF_00105">
    <property type="entry name" value="GreA_GreB"/>
    <property type="match status" value="1"/>
</dbReference>
<dbReference type="InterPro" id="IPR036953">
    <property type="entry name" value="GreA/GreB_C_sf"/>
</dbReference>
<dbReference type="InterPro" id="IPR018151">
    <property type="entry name" value="TF_GreA/GreB_CS"/>
</dbReference>
<dbReference type="InterPro" id="IPR006359">
    <property type="entry name" value="Tscrpt_elong_fac_GreA"/>
</dbReference>
<dbReference type="InterPro" id="IPR028624">
    <property type="entry name" value="Tscrpt_elong_fac_GreA/B"/>
</dbReference>
<dbReference type="InterPro" id="IPR001437">
    <property type="entry name" value="Tscrpt_elong_fac_GreA/B_C"/>
</dbReference>
<dbReference type="InterPro" id="IPR023459">
    <property type="entry name" value="Tscrpt_elong_fac_GreA/B_fam"/>
</dbReference>
<dbReference type="InterPro" id="IPR022691">
    <property type="entry name" value="Tscrpt_elong_fac_GreA/B_N"/>
</dbReference>
<dbReference type="InterPro" id="IPR036805">
    <property type="entry name" value="Tscrpt_elong_fac_GreA/B_N_sf"/>
</dbReference>
<dbReference type="NCBIfam" id="TIGR01462">
    <property type="entry name" value="greA"/>
    <property type="match status" value="1"/>
</dbReference>
<dbReference type="NCBIfam" id="NF001261">
    <property type="entry name" value="PRK00226.1-2"/>
    <property type="match status" value="1"/>
</dbReference>
<dbReference type="NCBIfam" id="NF001263">
    <property type="entry name" value="PRK00226.1-4"/>
    <property type="match status" value="1"/>
</dbReference>
<dbReference type="NCBIfam" id="NF001264">
    <property type="entry name" value="PRK00226.1-5"/>
    <property type="match status" value="1"/>
</dbReference>
<dbReference type="PANTHER" id="PTHR30437">
    <property type="entry name" value="TRANSCRIPTION ELONGATION FACTOR GREA"/>
    <property type="match status" value="1"/>
</dbReference>
<dbReference type="PANTHER" id="PTHR30437:SF4">
    <property type="entry name" value="TRANSCRIPTION ELONGATION FACTOR GREA"/>
    <property type="match status" value="1"/>
</dbReference>
<dbReference type="Pfam" id="PF01272">
    <property type="entry name" value="GreA_GreB"/>
    <property type="match status" value="1"/>
</dbReference>
<dbReference type="Pfam" id="PF03449">
    <property type="entry name" value="GreA_GreB_N"/>
    <property type="match status" value="1"/>
</dbReference>
<dbReference type="PIRSF" id="PIRSF006092">
    <property type="entry name" value="GreA_GreB"/>
    <property type="match status" value="1"/>
</dbReference>
<dbReference type="SUPFAM" id="SSF54534">
    <property type="entry name" value="FKBP-like"/>
    <property type="match status" value="1"/>
</dbReference>
<dbReference type="SUPFAM" id="SSF46557">
    <property type="entry name" value="GreA transcript cleavage protein, N-terminal domain"/>
    <property type="match status" value="1"/>
</dbReference>
<dbReference type="PROSITE" id="PS00829">
    <property type="entry name" value="GREAB_1"/>
    <property type="match status" value="1"/>
</dbReference>
<dbReference type="PROSITE" id="PS00830">
    <property type="entry name" value="GREAB_2"/>
    <property type="match status" value="1"/>
</dbReference>
<comment type="function">
    <text evidence="1">Necessary for efficient RNA polymerase transcription elongation past template-encoded arresting sites. The arresting sites in DNA have the property of trapping a certain fraction of elongating RNA polymerases that pass through, resulting in locked ternary complexes. Cleavage of the nascent transcript by cleavage factors such as GreA or GreB allows the resumption of elongation from the new 3'terminus. GreA releases sequences of 2 to 3 nucleotides.</text>
</comment>
<comment type="similarity">
    <text evidence="1">Belongs to the GreA/GreB family.</text>
</comment>
<sequence>MSQSVPMTEEGYRSLQDELKHLIRVERPKVVQDIAEARSHGDLSENAEYDAAKNRQGFIEGRIKELNDKIARAEVIKPGDVVTDKIVFGASVTLFDVDTDSEVTYKIVGEDEADLKHGKISVTSPVGRALIGHRLDDEVRIKVPSGLKIYEVVNIAYM</sequence>